<dbReference type="EC" id="6.1.1.7"/>
<dbReference type="EMBL" id="CP000048">
    <property type="protein sequence ID" value="AAX16736.1"/>
    <property type="molecule type" value="Genomic_DNA"/>
</dbReference>
<dbReference type="RefSeq" id="WP_012421993.1">
    <property type="nucleotide sequence ID" value="NZ_CP073136.1"/>
</dbReference>
<dbReference type="SMR" id="B2RZT0"/>
<dbReference type="KEGG" id="bhr:BH0220"/>
<dbReference type="HOGENOM" id="CLU_004485_0_2_12"/>
<dbReference type="Proteomes" id="UP000008834">
    <property type="component" value="Chromosome"/>
</dbReference>
<dbReference type="GO" id="GO:0005737">
    <property type="term" value="C:cytoplasm"/>
    <property type="evidence" value="ECO:0007669"/>
    <property type="project" value="UniProtKB-SubCell"/>
</dbReference>
<dbReference type="GO" id="GO:0004813">
    <property type="term" value="F:alanine-tRNA ligase activity"/>
    <property type="evidence" value="ECO:0007669"/>
    <property type="project" value="UniProtKB-UniRule"/>
</dbReference>
<dbReference type="GO" id="GO:0002161">
    <property type="term" value="F:aminoacyl-tRNA deacylase activity"/>
    <property type="evidence" value="ECO:0007669"/>
    <property type="project" value="TreeGrafter"/>
</dbReference>
<dbReference type="GO" id="GO:0005524">
    <property type="term" value="F:ATP binding"/>
    <property type="evidence" value="ECO:0007669"/>
    <property type="project" value="UniProtKB-UniRule"/>
</dbReference>
<dbReference type="GO" id="GO:0000049">
    <property type="term" value="F:tRNA binding"/>
    <property type="evidence" value="ECO:0007669"/>
    <property type="project" value="UniProtKB-KW"/>
</dbReference>
<dbReference type="GO" id="GO:0008270">
    <property type="term" value="F:zinc ion binding"/>
    <property type="evidence" value="ECO:0007669"/>
    <property type="project" value="UniProtKB-UniRule"/>
</dbReference>
<dbReference type="GO" id="GO:0006419">
    <property type="term" value="P:alanyl-tRNA aminoacylation"/>
    <property type="evidence" value="ECO:0007669"/>
    <property type="project" value="UniProtKB-UniRule"/>
</dbReference>
<dbReference type="CDD" id="cd00673">
    <property type="entry name" value="AlaRS_core"/>
    <property type="match status" value="1"/>
</dbReference>
<dbReference type="FunFam" id="3.30.980.10:FF:000004">
    <property type="entry name" value="Alanine--tRNA ligase, cytoplasmic"/>
    <property type="match status" value="1"/>
</dbReference>
<dbReference type="Gene3D" id="3.30.54.20">
    <property type="match status" value="1"/>
</dbReference>
<dbReference type="Gene3D" id="3.30.930.10">
    <property type="entry name" value="Bira Bifunctional Protein, Domain 2"/>
    <property type="match status" value="1"/>
</dbReference>
<dbReference type="Gene3D" id="3.30.980.10">
    <property type="entry name" value="Threonyl-trna Synthetase, Chain A, domain 2"/>
    <property type="match status" value="1"/>
</dbReference>
<dbReference type="HAMAP" id="MF_00036_B">
    <property type="entry name" value="Ala_tRNA_synth_B"/>
    <property type="match status" value="1"/>
</dbReference>
<dbReference type="InterPro" id="IPR045864">
    <property type="entry name" value="aa-tRNA-synth_II/BPL/LPL"/>
</dbReference>
<dbReference type="InterPro" id="IPR002318">
    <property type="entry name" value="Ala-tRNA-lgiase_IIc"/>
</dbReference>
<dbReference type="InterPro" id="IPR018162">
    <property type="entry name" value="Ala-tRNA-ligase_IIc_anticod-bd"/>
</dbReference>
<dbReference type="InterPro" id="IPR018165">
    <property type="entry name" value="Ala-tRNA-synth_IIc_core"/>
</dbReference>
<dbReference type="InterPro" id="IPR018164">
    <property type="entry name" value="Ala-tRNA-synth_IIc_N"/>
</dbReference>
<dbReference type="InterPro" id="IPR050058">
    <property type="entry name" value="Ala-tRNA_ligase"/>
</dbReference>
<dbReference type="InterPro" id="IPR023033">
    <property type="entry name" value="Ala_tRNA_ligase_euk/bac"/>
</dbReference>
<dbReference type="InterPro" id="IPR018163">
    <property type="entry name" value="Thr/Ala-tRNA-synth_IIc_edit"/>
</dbReference>
<dbReference type="InterPro" id="IPR012947">
    <property type="entry name" value="tRNA_SAD"/>
</dbReference>
<dbReference type="NCBIfam" id="TIGR00344">
    <property type="entry name" value="alaS"/>
    <property type="match status" value="1"/>
</dbReference>
<dbReference type="NCBIfam" id="NF002436">
    <property type="entry name" value="PRK01584.1"/>
    <property type="match status" value="1"/>
</dbReference>
<dbReference type="PANTHER" id="PTHR11777:SF9">
    <property type="entry name" value="ALANINE--TRNA LIGASE, CYTOPLASMIC"/>
    <property type="match status" value="1"/>
</dbReference>
<dbReference type="PANTHER" id="PTHR11777">
    <property type="entry name" value="ALANYL-TRNA SYNTHETASE"/>
    <property type="match status" value="1"/>
</dbReference>
<dbReference type="Pfam" id="PF01411">
    <property type="entry name" value="tRNA-synt_2c"/>
    <property type="match status" value="1"/>
</dbReference>
<dbReference type="Pfam" id="PF07973">
    <property type="entry name" value="tRNA_SAD"/>
    <property type="match status" value="1"/>
</dbReference>
<dbReference type="PRINTS" id="PR00980">
    <property type="entry name" value="TRNASYNTHALA"/>
</dbReference>
<dbReference type="SMART" id="SM00863">
    <property type="entry name" value="tRNA_SAD"/>
    <property type="match status" value="1"/>
</dbReference>
<dbReference type="SUPFAM" id="SSF55681">
    <property type="entry name" value="Class II aaRS and biotin synthetases"/>
    <property type="match status" value="1"/>
</dbReference>
<dbReference type="SUPFAM" id="SSF101353">
    <property type="entry name" value="Putative anticodon-binding domain of alanyl-tRNA synthetase (AlaRS)"/>
    <property type="match status" value="1"/>
</dbReference>
<dbReference type="SUPFAM" id="SSF55186">
    <property type="entry name" value="ThrRS/AlaRS common domain"/>
    <property type="match status" value="1"/>
</dbReference>
<dbReference type="PROSITE" id="PS50860">
    <property type="entry name" value="AA_TRNA_LIGASE_II_ALA"/>
    <property type="match status" value="1"/>
</dbReference>
<accession>B2RZT0</accession>
<protein>
    <recommendedName>
        <fullName>Alanine--tRNA ligase</fullName>
        <ecNumber>6.1.1.7</ecNumber>
    </recommendedName>
    <alternativeName>
        <fullName>Alanyl-tRNA synthetase</fullName>
        <shortName>AlaRS</shortName>
    </alternativeName>
</protein>
<sequence length="593" mass="67598">MKLDELRKKYIDFFKSKGHCEIAGKSLIPDNDSTVLFNTAGMQPLVPYLLGEMHPSGDMLVDVQKCLRTGDIDEVGDLSHLTFFEMLGNWSLGAYFKELSVKYSFEFLTSPNYLNISKDKLYVSVFEGDESIPRDTETANVWESLGIPKDRIFYLSREHNFWGPVGNTGPCGPDTEIFVDTGKEKCSVRCDITCSCGKYFEIWNNVFMQYKRDENGNYEELKRKCVDTGMGIERTITFLQGKSSVYDTDAFKPIIDKIEKISGKIYGQNLEDDRSIRIIADHIKASCFILADNFAVLPSNIGQGYVLRRIIRRAIRYAKKLGMESYVLADLVDSVEEIYKSFYKELTEKKDFIKAELNVEEEKFFKTLRHGEQEFIKLIQQLSSKSIPGDISFKLYDTYGFPYEITEELATEYGFSIDKAGFEEHFKKHQEVSKKGGDKVFKGGLADCTYETTKLHTATHLLHKALQLVLGEHVRQKGSNITAERLRFDFNHPYKMTDDEIKQVEDMVNLQIKNKLSVKRSVMNLDDALAKGAMALFGEKYEDIVSVYEIDGFSIEVCGGPHVKNTGELGTFKIQKEQASSSGVRRIRAILID</sequence>
<feature type="chain" id="PRO_0000347511" description="Alanine--tRNA ligase">
    <location>
        <begin position="1"/>
        <end position="593"/>
    </location>
</feature>
<feature type="binding site" evidence="2">
    <location>
        <position position="456"/>
    </location>
    <ligand>
        <name>Zn(2+)</name>
        <dbReference type="ChEBI" id="CHEBI:29105"/>
    </ligand>
</feature>
<feature type="binding site" evidence="2">
    <location>
        <position position="460"/>
    </location>
    <ligand>
        <name>Zn(2+)</name>
        <dbReference type="ChEBI" id="CHEBI:29105"/>
    </ligand>
</feature>
<feature type="binding site" evidence="2">
    <location>
        <position position="558"/>
    </location>
    <ligand>
        <name>Zn(2+)</name>
        <dbReference type="ChEBI" id="CHEBI:29105"/>
    </ligand>
</feature>
<feature type="binding site" evidence="2">
    <location>
        <position position="562"/>
    </location>
    <ligand>
        <name>Zn(2+)</name>
        <dbReference type="ChEBI" id="CHEBI:29105"/>
    </ligand>
</feature>
<keyword id="KW-0030">Aminoacyl-tRNA synthetase</keyword>
<keyword id="KW-0067">ATP-binding</keyword>
<keyword id="KW-0963">Cytoplasm</keyword>
<keyword id="KW-0436">Ligase</keyword>
<keyword id="KW-0479">Metal-binding</keyword>
<keyword id="KW-0547">Nucleotide-binding</keyword>
<keyword id="KW-0648">Protein biosynthesis</keyword>
<keyword id="KW-0694">RNA-binding</keyword>
<keyword id="KW-0820">tRNA-binding</keyword>
<keyword id="KW-0862">Zinc</keyword>
<organism>
    <name type="scientific">Borrelia hermsii (strain HS1 / DAH)</name>
    <dbReference type="NCBI Taxonomy" id="314723"/>
    <lineage>
        <taxon>Bacteria</taxon>
        <taxon>Pseudomonadati</taxon>
        <taxon>Spirochaetota</taxon>
        <taxon>Spirochaetia</taxon>
        <taxon>Spirochaetales</taxon>
        <taxon>Borreliaceae</taxon>
        <taxon>Borrelia</taxon>
    </lineage>
</organism>
<gene>
    <name type="primary">alaS</name>
    <name type="ordered locus">BH0220</name>
</gene>
<proteinExistence type="inferred from homology"/>
<evidence type="ECO:0000250" key="1"/>
<evidence type="ECO:0000255" key="2"/>
<evidence type="ECO:0000305" key="3"/>
<comment type="function">
    <text evidence="1">Catalyzes the attachment of alanine to tRNA(Ala) in a two-step reaction: alanine is first activated by ATP to form Ala-AMP and then transferred to the acceptor end of tRNA(Ala). Also edits incorrectly charged Ser-tRNA(Ala) and Gly-tRNA(Ala) via its editing domain (By similarity).</text>
</comment>
<comment type="catalytic activity">
    <reaction>
        <text>tRNA(Ala) + L-alanine + ATP = L-alanyl-tRNA(Ala) + AMP + diphosphate</text>
        <dbReference type="Rhea" id="RHEA:12540"/>
        <dbReference type="Rhea" id="RHEA-COMP:9657"/>
        <dbReference type="Rhea" id="RHEA-COMP:9923"/>
        <dbReference type="ChEBI" id="CHEBI:30616"/>
        <dbReference type="ChEBI" id="CHEBI:33019"/>
        <dbReference type="ChEBI" id="CHEBI:57972"/>
        <dbReference type="ChEBI" id="CHEBI:78442"/>
        <dbReference type="ChEBI" id="CHEBI:78497"/>
        <dbReference type="ChEBI" id="CHEBI:456215"/>
        <dbReference type="EC" id="6.1.1.7"/>
    </reaction>
</comment>
<comment type="cofactor">
    <cofactor evidence="1">
        <name>Zn(2+)</name>
        <dbReference type="ChEBI" id="CHEBI:29105"/>
    </cofactor>
    <text evidence="1">Binds 1 zinc ion per subunit.</text>
</comment>
<comment type="subcellular location">
    <subcellularLocation>
        <location evidence="1">Cytoplasm</location>
    </subcellularLocation>
</comment>
<comment type="domain">
    <text evidence="1">Consists of two domains; the N-terminal catalytic domain (in this organism this is shorter than usual) and the editing domain; the C-terminal C-Ala domain found in most orthologs is missing. The editing domain removes incorrectly charged amino acids (By similarity).</text>
</comment>
<comment type="similarity">
    <text evidence="3">Belongs to the class-II aminoacyl-tRNA synthetase family.</text>
</comment>
<name>SYA_BORHD</name>
<reference key="1">
    <citation type="submission" date="2004-12" db="EMBL/GenBank/DDBJ databases">
        <title>The genome sequence of Borrelia hermsii and Borrelia turicatae: comparative analysis of two agents of endemic N. America relapsing fever.</title>
        <authorList>
            <person name="Porcella S.F."/>
            <person name="Raffel S.J."/>
            <person name="Schrumpf M.E."/>
            <person name="Montgomery B."/>
            <person name="Smith T."/>
            <person name="Schwan T.G."/>
        </authorList>
    </citation>
    <scope>NUCLEOTIDE SEQUENCE [LARGE SCALE GENOMIC DNA]</scope>
    <source>
        <strain>HS1 / DAH</strain>
    </source>
</reference>